<reference key="1">
    <citation type="journal article" date="2015" name="Angew. Chem. Int. Ed.">
        <title>Reconstitution of biosynthetic machinery for the synthesis of the highly elaborated indole diterpene penitrem.</title>
        <authorList>
            <person name="Liu C."/>
            <person name="Tagami K."/>
            <person name="Minami A."/>
            <person name="Matsumoto T."/>
            <person name="Frisvad J.C."/>
            <person name="Suzuki H."/>
            <person name="Ishikawa J."/>
            <person name="Gomi K."/>
            <person name="Oikawa H."/>
        </authorList>
    </citation>
    <scope>NUCLEOTIDE SEQUENCE [GENOMIC DNA]</scope>
    <scope>IDENTIFICATION</scope>
    <scope>FUNCTION</scope>
    <scope>PATHWAY</scope>
    <source>
        <strain>ATCC 90288 / AK-40</strain>
    </source>
</reference>
<protein>
    <recommendedName>
        <fullName evidence="4">O-acetyltransferase ptmV</fullName>
        <ecNumber evidence="3">2.3.1.-</ecNumber>
    </recommendedName>
    <alternativeName>
        <fullName evidence="4">Penitrem biosynthesis cluster 1 protein V</fullName>
    </alternativeName>
</protein>
<accession>A0A140JWS4</accession>
<proteinExistence type="inferred from homology"/>
<organism>
    <name type="scientific">Penicillium ochrochloron</name>
    <dbReference type="NCBI Taxonomy" id="69780"/>
    <lineage>
        <taxon>Eukaryota</taxon>
        <taxon>Fungi</taxon>
        <taxon>Dikarya</taxon>
        <taxon>Ascomycota</taxon>
        <taxon>Pezizomycotina</taxon>
        <taxon>Eurotiomycetes</taxon>
        <taxon>Eurotiomycetidae</taxon>
        <taxon>Eurotiales</taxon>
        <taxon>Aspergillaceae</taxon>
        <taxon>Penicillium</taxon>
    </lineage>
</organism>
<name>PTMV_PENOH</name>
<dbReference type="EC" id="2.3.1.-" evidence="3"/>
<dbReference type="EMBL" id="LC027936">
    <property type="protein sequence ID" value="BAU61551.1"/>
    <property type="molecule type" value="Genomic_DNA"/>
</dbReference>
<dbReference type="SMR" id="A0A140JWS4"/>
<dbReference type="GO" id="GO:0016746">
    <property type="term" value="F:acyltransferase activity"/>
    <property type="evidence" value="ECO:0007669"/>
    <property type="project" value="UniProtKB-KW"/>
</dbReference>
<dbReference type="Gene3D" id="3.30.559.10">
    <property type="entry name" value="Chloramphenicol acetyltransferase-like domain"/>
    <property type="match status" value="2"/>
</dbReference>
<dbReference type="InterPro" id="IPR023213">
    <property type="entry name" value="CAT-like_dom_sf"/>
</dbReference>
<dbReference type="InterPro" id="IPR051283">
    <property type="entry name" value="Sec_Metabolite_Acyltrans"/>
</dbReference>
<dbReference type="PANTHER" id="PTHR31896">
    <property type="entry name" value="FAMILY REGULATORY PROTEIN, PUTATIVE (AFU_ORTHOLOGUE AFUA_3G14730)-RELATED"/>
    <property type="match status" value="1"/>
</dbReference>
<dbReference type="PANTHER" id="PTHR31896:SF64">
    <property type="entry name" value="TRICHOTHECENE 3-O-ACETYLTRANSFERASE"/>
    <property type="match status" value="1"/>
</dbReference>
<dbReference type="Pfam" id="PF02458">
    <property type="entry name" value="Transferase"/>
    <property type="match status" value="2"/>
</dbReference>
<sequence>MSKPLFEAYPLTGLDHTIPPCYVRFLLTFPVPDVALAVNQLQKGAENLIEKLPFLAGYLASCETPGVRPGQLEIRPPAGERRPVCLVAHHSNSYLADSSATSTTEQLGTANENYLPVPFFPELDKPVPIFRVKVNAMTDGIILGFAFHHSVIDATGMGTIVRDFARCCRGPDGGPLEISLESQQDSREKLRHSGGPPDPRFDHNGEYPLVASLPADLEAMKQVLIQTARLMSTQYFRIPASLVNTLKESCNRMLRESPALRDEGENPWISSNDLVVSLLWLCLNRVRYPEDNTNVIPPSDSSVCMAVNIRGRLQSPIDPGYVGNAIVLLRESVGMNAFLHKPGDDDPLGAQCYETAKRLGREAWEAALVRIALAIRRKLNTINASYVRSVISYLEDVPDLSTVAFGQTDYHISSWRDIGVYEADFGGHMGHPSEMRVPDGMVDGMFYILPRRQGTHPCWEIHVTIHQDTMKRLIADPVWARYTVRKPSSLCRDE</sequence>
<comment type="function">
    <text evidence="3">O-acetyltransferase; part of the gene cluster that mediates the biosynthesis of the indole diterpenes penitrems (PubMed:25831977). The geranylgeranyl diphosphate (GGPP) synthase ptmG catalyzes the first step in penitrem biosynthesis via conversion of farnesyl pyrophosphate and isopentyl pyrophosphate into geranylgeranyl pyrophosphate (GGPP) (PubMed:25831977). Condensation of indole-3-glycerol phosphate with GGPP by the prenyl transferase ptmC then forms 3-geranylgeranylindole (3-GGI) (PubMed:25831977). Epoxidation by the FAD-dependent monooxygenase ptmM leads to a epoxidized-GGI that is substrate of the terpene cyclase ptmB for cyclization to yield paspaline (PubMed:25831977). Paspaline is subsequently converted to 13-desoxypaxilline by the cytochrome P450 monooxygenase ptmP, the latter being then converted to paxilline by the cytochrome P450 monooxygenase ptmQ (PubMed:25831977). Paxilline is converted to beta-paxitriol via C-10 ketoreduction by the short-chain dehydrogenase ptmH which can be monoprenylated at the C-20 by the indole diterpene prenyltransferase ptmD (PubMed:25831977). A two-step elimination (acetylation and elimination) process performed by the O-acetyltransferase ptmV and ptmI leads to the production of the prenylated form of penijanthine (PubMed:25831977). The FAD-linked oxidoreductase ptmO then converts the prenylated form of penijanthine into PC-M5 which is in turn transformed into PC-M4 by the aromatic dimethylallyltransferase ptmE (PubMed:25831977). Five sequential oxidative transformations performed by the cytochrome P450 monooxygenases ptmK, ptmU, ptmL, ptmN and ptmJ yield the various penitrem compounds. PtmK, ptmU and ptmM are involved in the formation of the key bicyclic ring of penitrem C via the formation of the intermediates secopenitrem D and penitrem D. PtmL catalyzes the epoxidation of penitrem D and C to yield penitrem B and F, respectively. PtmJ catalyzes the last benzylic hydroxylation to convert penitrem B to prenitrem E and penitrem F to penitrem A (PubMed:25831977).</text>
</comment>
<comment type="pathway">
    <text evidence="3">Secondary metabolite biosynthesis.</text>
</comment>
<comment type="subunit">
    <text evidence="1">Monomer.</text>
</comment>
<comment type="similarity">
    <text evidence="5">Belongs to the fumigaclavine B O-acetyltransferase family.</text>
</comment>
<feature type="chain" id="PRO_0000446595" description="O-acetyltransferase ptmV">
    <location>
        <begin position="1"/>
        <end position="494"/>
    </location>
</feature>
<feature type="region of interest" description="Disordered" evidence="2">
    <location>
        <begin position="181"/>
        <end position="203"/>
    </location>
</feature>
<evidence type="ECO:0000250" key="1">
    <source>
        <dbReference type="UniProtKB" id="Q4WZ64"/>
    </source>
</evidence>
<evidence type="ECO:0000256" key="2">
    <source>
        <dbReference type="SAM" id="MobiDB-lite"/>
    </source>
</evidence>
<evidence type="ECO:0000269" key="3">
    <source>
    </source>
</evidence>
<evidence type="ECO:0000303" key="4">
    <source>
    </source>
</evidence>
<evidence type="ECO:0000305" key="5"/>
<gene>
    <name evidence="4" type="primary">ptmV</name>
</gene>
<keyword id="KW-0012">Acyltransferase</keyword>
<keyword id="KW-0808">Transferase</keyword>